<evidence type="ECO:0000255" key="1">
    <source>
        <dbReference type="HAMAP-Rule" id="MF_00113"/>
    </source>
</evidence>
<gene>
    <name evidence="1" type="primary">queA</name>
    <name type="ordered locus">ECP_0464</name>
</gene>
<sequence length="356" mass="39430">MRVTDFSFELPESLIAHYPMPERSSCRLLSLDGPTGALTHGTFTDLLDKLNPGDLLVFNNTRVIPARLFGRKASGGKIEVLVERMLDDKRILAHIRASKAPKPGAELLLGDDESINATMTARHGALFEVEFNDQRSVLDILNSIGHMPLPPYIDRPDEDADRELYQTVYSEKPGAVAAPTAGLHFDEPLLEKLRAKGVEMAFVTLHVGAGTFQPVRVDTIEDHIMHSEYAEVPQDVVDAVLAAKARGNRVIAVGTTSVRSLESAAQAAKNDLIEPFFDDTQIFIYPGFQYKVVDALVTNFHLPESTLIMLVSAFAGYQHTMNAYKAAVEEKYRFFSYGDAMFITYNPQAINERVGE</sequence>
<feature type="chain" id="PRO_1000015210" description="S-adenosylmethionine:tRNA ribosyltransferase-isomerase">
    <location>
        <begin position="1"/>
        <end position="356"/>
    </location>
</feature>
<name>QUEA_ECOL5</name>
<accession>Q0TKN6</accession>
<comment type="function">
    <text evidence="1">Transfers and isomerizes the ribose moiety from AdoMet to the 7-aminomethyl group of 7-deazaguanine (preQ1-tRNA) to give epoxyqueuosine (oQ-tRNA).</text>
</comment>
<comment type="catalytic activity">
    <reaction evidence="1">
        <text>7-aminomethyl-7-carbaguanosine(34) in tRNA + S-adenosyl-L-methionine = epoxyqueuosine(34) in tRNA + adenine + L-methionine + 2 H(+)</text>
        <dbReference type="Rhea" id="RHEA:32155"/>
        <dbReference type="Rhea" id="RHEA-COMP:10342"/>
        <dbReference type="Rhea" id="RHEA-COMP:18582"/>
        <dbReference type="ChEBI" id="CHEBI:15378"/>
        <dbReference type="ChEBI" id="CHEBI:16708"/>
        <dbReference type="ChEBI" id="CHEBI:57844"/>
        <dbReference type="ChEBI" id="CHEBI:59789"/>
        <dbReference type="ChEBI" id="CHEBI:82833"/>
        <dbReference type="ChEBI" id="CHEBI:194443"/>
        <dbReference type="EC" id="2.4.99.17"/>
    </reaction>
</comment>
<comment type="pathway">
    <text evidence="1">tRNA modification; tRNA-queuosine biosynthesis.</text>
</comment>
<comment type="subunit">
    <text evidence="1">Monomer.</text>
</comment>
<comment type="subcellular location">
    <subcellularLocation>
        <location evidence="1">Cytoplasm</location>
    </subcellularLocation>
</comment>
<comment type="similarity">
    <text evidence="1">Belongs to the QueA family.</text>
</comment>
<reference key="1">
    <citation type="journal article" date="2006" name="Mol. Microbiol.">
        <title>Role of pathogenicity island-associated integrases in the genome plasticity of uropathogenic Escherichia coli strain 536.</title>
        <authorList>
            <person name="Hochhut B."/>
            <person name="Wilde C."/>
            <person name="Balling G."/>
            <person name="Middendorf B."/>
            <person name="Dobrindt U."/>
            <person name="Brzuszkiewicz E."/>
            <person name="Gottschalk G."/>
            <person name="Carniel E."/>
            <person name="Hacker J."/>
        </authorList>
    </citation>
    <scope>NUCLEOTIDE SEQUENCE [LARGE SCALE GENOMIC DNA]</scope>
    <source>
        <strain>536 / UPEC</strain>
    </source>
</reference>
<keyword id="KW-0963">Cytoplasm</keyword>
<keyword id="KW-0671">Queuosine biosynthesis</keyword>
<keyword id="KW-0949">S-adenosyl-L-methionine</keyword>
<keyword id="KW-0808">Transferase</keyword>
<protein>
    <recommendedName>
        <fullName evidence="1">S-adenosylmethionine:tRNA ribosyltransferase-isomerase</fullName>
        <ecNumber evidence="1">2.4.99.17</ecNumber>
    </recommendedName>
    <alternativeName>
        <fullName evidence="1">Queuosine biosynthesis protein QueA</fullName>
    </alternativeName>
</protein>
<dbReference type="EC" id="2.4.99.17" evidence="1"/>
<dbReference type="EMBL" id="CP000247">
    <property type="protein sequence ID" value="ABG68495.1"/>
    <property type="molecule type" value="Genomic_DNA"/>
</dbReference>
<dbReference type="RefSeq" id="WP_001266506.1">
    <property type="nucleotide sequence ID" value="NC_008253.1"/>
</dbReference>
<dbReference type="SMR" id="Q0TKN6"/>
<dbReference type="KEGG" id="ecp:ECP_0464"/>
<dbReference type="HOGENOM" id="CLU_039110_1_0_6"/>
<dbReference type="UniPathway" id="UPA00392"/>
<dbReference type="Proteomes" id="UP000009182">
    <property type="component" value="Chromosome"/>
</dbReference>
<dbReference type="GO" id="GO:0005737">
    <property type="term" value="C:cytoplasm"/>
    <property type="evidence" value="ECO:0007669"/>
    <property type="project" value="UniProtKB-SubCell"/>
</dbReference>
<dbReference type="GO" id="GO:0051075">
    <property type="term" value="F:S-adenosylmethionine:tRNA ribosyltransferase-isomerase activity"/>
    <property type="evidence" value="ECO:0007669"/>
    <property type="project" value="UniProtKB-EC"/>
</dbReference>
<dbReference type="GO" id="GO:0008616">
    <property type="term" value="P:queuosine biosynthetic process"/>
    <property type="evidence" value="ECO:0007669"/>
    <property type="project" value="UniProtKB-UniRule"/>
</dbReference>
<dbReference type="GO" id="GO:0002099">
    <property type="term" value="P:tRNA wobble guanine modification"/>
    <property type="evidence" value="ECO:0007669"/>
    <property type="project" value="TreeGrafter"/>
</dbReference>
<dbReference type="FunFam" id="2.40.10.240:FF:000001">
    <property type="entry name" value="S-adenosylmethionine:tRNA ribosyltransferase-isomerase"/>
    <property type="match status" value="1"/>
</dbReference>
<dbReference type="FunFam" id="3.40.1780.10:FF:000001">
    <property type="entry name" value="S-adenosylmethionine:tRNA ribosyltransferase-isomerase"/>
    <property type="match status" value="1"/>
</dbReference>
<dbReference type="Gene3D" id="2.40.10.240">
    <property type="entry name" value="QueA-like"/>
    <property type="match status" value="1"/>
</dbReference>
<dbReference type="Gene3D" id="3.40.1780.10">
    <property type="entry name" value="QueA-like"/>
    <property type="match status" value="1"/>
</dbReference>
<dbReference type="HAMAP" id="MF_00113">
    <property type="entry name" value="QueA"/>
    <property type="match status" value="1"/>
</dbReference>
<dbReference type="InterPro" id="IPR003699">
    <property type="entry name" value="QueA"/>
</dbReference>
<dbReference type="InterPro" id="IPR042118">
    <property type="entry name" value="QueA_dom1"/>
</dbReference>
<dbReference type="InterPro" id="IPR042119">
    <property type="entry name" value="QueA_dom2"/>
</dbReference>
<dbReference type="InterPro" id="IPR036100">
    <property type="entry name" value="QueA_sf"/>
</dbReference>
<dbReference type="NCBIfam" id="NF001140">
    <property type="entry name" value="PRK00147.1"/>
    <property type="match status" value="1"/>
</dbReference>
<dbReference type="NCBIfam" id="TIGR00113">
    <property type="entry name" value="queA"/>
    <property type="match status" value="1"/>
</dbReference>
<dbReference type="PANTHER" id="PTHR30307">
    <property type="entry name" value="S-ADENOSYLMETHIONINE:TRNA RIBOSYLTRANSFERASE-ISOMERASE"/>
    <property type="match status" value="1"/>
</dbReference>
<dbReference type="PANTHER" id="PTHR30307:SF0">
    <property type="entry name" value="S-ADENOSYLMETHIONINE:TRNA RIBOSYLTRANSFERASE-ISOMERASE"/>
    <property type="match status" value="1"/>
</dbReference>
<dbReference type="Pfam" id="PF02547">
    <property type="entry name" value="Queuosine_synth"/>
    <property type="match status" value="1"/>
</dbReference>
<dbReference type="SUPFAM" id="SSF111337">
    <property type="entry name" value="QueA-like"/>
    <property type="match status" value="1"/>
</dbReference>
<organism>
    <name type="scientific">Escherichia coli O6:K15:H31 (strain 536 / UPEC)</name>
    <dbReference type="NCBI Taxonomy" id="362663"/>
    <lineage>
        <taxon>Bacteria</taxon>
        <taxon>Pseudomonadati</taxon>
        <taxon>Pseudomonadota</taxon>
        <taxon>Gammaproteobacteria</taxon>
        <taxon>Enterobacterales</taxon>
        <taxon>Enterobacteriaceae</taxon>
        <taxon>Escherichia</taxon>
    </lineage>
</organism>
<proteinExistence type="inferred from homology"/>